<protein>
    <recommendedName>
        <fullName>FGFR1 oncogene partner 2 homolog</fullName>
    </recommendedName>
</protein>
<evidence type="ECO:0000250" key="1"/>
<evidence type="ECO:0000255" key="2"/>
<evidence type="ECO:0000256" key="3">
    <source>
        <dbReference type="SAM" id="MobiDB-lite"/>
    </source>
</evidence>
<evidence type="ECO:0000305" key="4"/>
<feature type="chain" id="PRO_0000299048" description="FGFR1 oncogene partner 2 homolog">
    <location>
        <begin position="1"/>
        <end position="216"/>
    </location>
</feature>
<feature type="region of interest" description="Disordered" evidence="3">
    <location>
        <begin position="193"/>
        <end position="216"/>
    </location>
</feature>
<feature type="coiled-coil region" evidence="2">
    <location>
        <begin position="33"/>
        <end position="102"/>
    </location>
</feature>
<feature type="coiled-coil region" evidence="2">
    <location>
        <begin position="131"/>
        <end position="185"/>
    </location>
</feature>
<feature type="compositionally biased region" description="Polar residues" evidence="3">
    <location>
        <begin position="206"/>
        <end position="216"/>
    </location>
</feature>
<dbReference type="EMBL" id="CR926409">
    <property type="protein sequence ID" value="CAJ81600.1"/>
    <property type="molecule type" value="mRNA"/>
</dbReference>
<dbReference type="EMBL" id="BC076932">
    <property type="protein sequence ID" value="AAH76932.1"/>
    <property type="molecule type" value="mRNA"/>
</dbReference>
<dbReference type="RefSeq" id="NP_001006846.1">
    <property type="nucleotide sequence ID" value="NM_001006845.1"/>
</dbReference>
<dbReference type="SMR" id="Q6DF11"/>
<dbReference type="FunCoup" id="Q6DF11">
    <property type="interactions" value="1950"/>
</dbReference>
<dbReference type="STRING" id="8364.ENSXETP00000033631"/>
<dbReference type="PaxDb" id="8364-ENSXETP00000035989"/>
<dbReference type="DNASU" id="448596"/>
<dbReference type="GeneID" id="448596"/>
<dbReference type="KEGG" id="xtr:448596"/>
<dbReference type="AGR" id="Xenbase:XB-GENE-975391"/>
<dbReference type="CTD" id="26127"/>
<dbReference type="Xenbase" id="XB-GENE-975391">
    <property type="gene designation" value="fgfr1op2"/>
</dbReference>
<dbReference type="eggNOG" id="ENOG502QSAD">
    <property type="taxonomic scope" value="Eukaryota"/>
</dbReference>
<dbReference type="HOGENOM" id="CLU_073167_1_0_1"/>
<dbReference type="InParanoid" id="Q6DF11"/>
<dbReference type="OMA" id="KYRQHTE"/>
<dbReference type="OrthoDB" id="21214at2759"/>
<dbReference type="PhylomeDB" id="Q6DF11"/>
<dbReference type="Proteomes" id="UP000008143">
    <property type="component" value="Chromosome 3"/>
</dbReference>
<dbReference type="Bgee" id="ENSXETG00000016502">
    <property type="expression patterns" value="Expressed in blastula and 15 other cell types or tissues"/>
</dbReference>
<dbReference type="GO" id="GO:0005737">
    <property type="term" value="C:cytoplasm"/>
    <property type="evidence" value="ECO:0007669"/>
    <property type="project" value="UniProtKB-SubCell"/>
</dbReference>
<dbReference type="InterPro" id="IPR008555">
    <property type="entry name" value="SIKE"/>
</dbReference>
<dbReference type="PANTHER" id="PTHR12186:SF3">
    <property type="entry name" value="FGFR1 ONCOGENE PARTNER 2"/>
    <property type="match status" value="1"/>
</dbReference>
<dbReference type="PANTHER" id="PTHR12186">
    <property type="entry name" value="SIKE FAMILY MEMBER"/>
    <property type="match status" value="1"/>
</dbReference>
<dbReference type="Pfam" id="PF05769">
    <property type="entry name" value="SIKE"/>
    <property type="match status" value="1"/>
</dbReference>
<gene>
    <name type="primary">fgfr1op2</name>
    <name type="ORF">TGas092l14.1</name>
</gene>
<keyword id="KW-0175">Coiled coil</keyword>
<keyword id="KW-0963">Cytoplasm</keyword>
<keyword id="KW-1185">Reference proteome</keyword>
<comment type="subcellular location">
    <subcellularLocation>
        <location evidence="1">Cytoplasm</location>
    </subcellularLocation>
</comment>
<comment type="similarity">
    <text evidence="4">Belongs to the SIKE family.</text>
</comment>
<accession>Q6DF11</accession>
<organism>
    <name type="scientific">Xenopus tropicalis</name>
    <name type="common">Western clawed frog</name>
    <name type="synonym">Silurana tropicalis</name>
    <dbReference type="NCBI Taxonomy" id="8364"/>
    <lineage>
        <taxon>Eukaryota</taxon>
        <taxon>Metazoa</taxon>
        <taxon>Chordata</taxon>
        <taxon>Craniata</taxon>
        <taxon>Vertebrata</taxon>
        <taxon>Euteleostomi</taxon>
        <taxon>Amphibia</taxon>
        <taxon>Batrachia</taxon>
        <taxon>Anura</taxon>
        <taxon>Pipoidea</taxon>
        <taxon>Pipidae</taxon>
        <taxon>Xenopodinae</taxon>
        <taxon>Xenopus</taxon>
        <taxon>Silurana</taxon>
    </lineage>
</organism>
<reference key="1">
    <citation type="submission" date="2006-10" db="EMBL/GenBank/DDBJ databases">
        <authorList>
            <consortium name="Sanger Xenopus tropicalis EST/cDNA project"/>
        </authorList>
    </citation>
    <scope>NUCLEOTIDE SEQUENCE [LARGE SCALE MRNA]</scope>
    <source>
        <tissue>Gastrula</tissue>
    </source>
</reference>
<reference key="2">
    <citation type="submission" date="2004-07" db="EMBL/GenBank/DDBJ databases">
        <authorList>
            <consortium name="NIH - Xenopus Gene Collection (XGC) project"/>
        </authorList>
    </citation>
    <scope>NUCLEOTIDE SEQUENCE [LARGE SCALE MRNA]</scope>
</reference>
<proteinExistence type="evidence at transcript level"/>
<name>FGOP2_XENTR</name>
<sequence length="216" mass="25118">MSCTIEKVLADAKALVERLREHDGAAEVLIEQTTTLNKRVEAMKQYQEEVQELNEIARHRPRSTLVLGIQQENRQIRQLQQENKELRTSLKEHQSALELIMSKYREQMFRLLMASKKDDPGIIMKLKEQHSKELQAHIEKITEMTAVMKRAIEIDEQQGNQEHDRIVKLEQENKWLRKTLQITRASFLNLHKEDAAESSSHSASSVPNTDLSLRKS</sequence>